<comment type="function">
    <text evidence="1">Catalyzes the condensation of pantoate with beta-alanine in an ATP-dependent reaction via a pantoyl-adenylate intermediate.</text>
</comment>
<comment type="catalytic activity">
    <reaction evidence="1">
        <text>(R)-pantoate + beta-alanine + ATP = (R)-pantothenate + AMP + diphosphate + H(+)</text>
        <dbReference type="Rhea" id="RHEA:10912"/>
        <dbReference type="ChEBI" id="CHEBI:15378"/>
        <dbReference type="ChEBI" id="CHEBI:15980"/>
        <dbReference type="ChEBI" id="CHEBI:29032"/>
        <dbReference type="ChEBI" id="CHEBI:30616"/>
        <dbReference type="ChEBI" id="CHEBI:33019"/>
        <dbReference type="ChEBI" id="CHEBI:57966"/>
        <dbReference type="ChEBI" id="CHEBI:456215"/>
        <dbReference type="EC" id="6.3.2.1"/>
    </reaction>
</comment>
<comment type="pathway">
    <text evidence="1">Cofactor biosynthesis; (R)-pantothenate biosynthesis; (R)-pantothenate from (R)-pantoate and beta-alanine: step 1/1.</text>
</comment>
<comment type="subunit">
    <text evidence="1">Homodimer.</text>
</comment>
<comment type="subcellular location">
    <subcellularLocation>
        <location evidence="1">Cytoplasm</location>
    </subcellularLocation>
</comment>
<comment type="miscellaneous">
    <text evidence="1">The reaction proceeds by a bi uni uni bi ping pong mechanism.</text>
</comment>
<comment type="similarity">
    <text evidence="1">Belongs to the pantothenate synthetase family.</text>
</comment>
<dbReference type="EC" id="6.3.2.1" evidence="1"/>
<dbReference type="EMBL" id="CP000159">
    <property type="protein sequence ID" value="ABC43779.1"/>
    <property type="molecule type" value="Genomic_DNA"/>
</dbReference>
<dbReference type="RefSeq" id="WP_011404161.1">
    <property type="nucleotide sequence ID" value="NC_007677.1"/>
</dbReference>
<dbReference type="RefSeq" id="YP_445535.1">
    <property type="nucleotide sequence ID" value="NC_007677.1"/>
</dbReference>
<dbReference type="SMR" id="Q2S2P6"/>
<dbReference type="STRING" id="309807.SRU_1411"/>
<dbReference type="EnsemblBacteria" id="ABC43779">
    <property type="protein sequence ID" value="ABC43779"/>
    <property type="gene ID" value="SRU_1411"/>
</dbReference>
<dbReference type="GeneID" id="83728321"/>
<dbReference type="KEGG" id="sru:SRU_1411"/>
<dbReference type="PATRIC" id="fig|309807.25.peg.1466"/>
<dbReference type="eggNOG" id="COG0414">
    <property type="taxonomic scope" value="Bacteria"/>
</dbReference>
<dbReference type="HOGENOM" id="CLU_047148_0_0_10"/>
<dbReference type="OrthoDB" id="9773087at2"/>
<dbReference type="UniPathway" id="UPA00028">
    <property type="reaction ID" value="UER00005"/>
</dbReference>
<dbReference type="Proteomes" id="UP000008674">
    <property type="component" value="Chromosome"/>
</dbReference>
<dbReference type="GO" id="GO:0005829">
    <property type="term" value="C:cytosol"/>
    <property type="evidence" value="ECO:0007669"/>
    <property type="project" value="TreeGrafter"/>
</dbReference>
<dbReference type="GO" id="GO:0005524">
    <property type="term" value="F:ATP binding"/>
    <property type="evidence" value="ECO:0007669"/>
    <property type="project" value="UniProtKB-KW"/>
</dbReference>
<dbReference type="GO" id="GO:0004592">
    <property type="term" value="F:pantoate-beta-alanine ligase activity"/>
    <property type="evidence" value="ECO:0007669"/>
    <property type="project" value="UniProtKB-UniRule"/>
</dbReference>
<dbReference type="GO" id="GO:0015940">
    <property type="term" value="P:pantothenate biosynthetic process"/>
    <property type="evidence" value="ECO:0007669"/>
    <property type="project" value="UniProtKB-UniRule"/>
</dbReference>
<dbReference type="CDD" id="cd00560">
    <property type="entry name" value="PanC"/>
    <property type="match status" value="1"/>
</dbReference>
<dbReference type="FunFam" id="3.40.50.620:FF:000013">
    <property type="entry name" value="Pantothenate synthetase"/>
    <property type="match status" value="1"/>
</dbReference>
<dbReference type="Gene3D" id="3.40.50.620">
    <property type="entry name" value="HUPs"/>
    <property type="match status" value="1"/>
</dbReference>
<dbReference type="Gene3D" id="3.30.1300.10">
    <property type="entry name" value="Pantoate-beta-alanine ligase, C-terminal domain"/>
    <property type="match status" value="1"/>
</dbReference>
<dbReference type="HAMAP" id="MF_00158">
    <property type="entry name" value="PanC"/>
    <property type="match status" value="1"/>
</dbReference>
<dbReference type="InterPro" id="IPR004821">
    <property type="entry name" value="Cyt_trans-like"/>
</dbReference>
<dbReference type="InterPro" id="IPR003721">
    <property type="entry name" value="Pantoate_ligase"/>
</dbReference>
<dbReference type="InterPro" id="IPR042176">
    <property type="entry name" value="Pantoate_ligase_C"/>
</dbReference>
<dbReference type="InterPro" id="IPR014729">
    <property type="entry name" value="Rossmann-like_a/b/a_fold"/>
</dbReference>
<dbReference type="NCBIfam" id="TIGR00125">
    <property type="entry name" value="cyt_tran_rel"/>
    <property type="match status" value="1"/>
</dbReference>
<dbReference type="NCBIfam" id="TIGR00018">
    <property type="entry name" value="panC"/>
    <property type="match status" value="1"/>
</dbReference>
<dbReference type="PANTHER" id="PTHR21299">
    <property type="entry name" value="CYTIDYLATE KINASE/PANTOATE-BETA-ALANINE LIGASE"/>
    <property type="match status" value="1"/>
</dbReference>
<dbReference type="PANTHER" id="PTHR21299:SF1">
    <property type="entry name" value="PANTOATE--BETA-ALANINE LIGASE"/>
    <property type="match status" value="1"/>
</dbReference>
<dbReference type="Pfam" id="PF02569">
    <property type="entry name" value="Pantoate_ligase"/>
    <property type="match status" value="1"/>
</dbReference>
<dbReference type="SUPFAM" id="SSF52374">
    <property type="entry name" value="Nucleotidylyl transferase"/>
    <property type="match status" value="1"/>
</dbReference>
<proteinExistence type="inferred from homology"/>
<protein>
    <recommendedName>
        <fullName evidence="1">Pantothenate synthetase</fullName>
        <shortName evidence="1">PS</shortName>
        <ecNumber evidence="1">6.3.2.1</ecNumber>
    </recommendedName>
    <alternativeName>
        <fullName evidence="1">Pantoate--beta-alanine ligase</fullName>
    </alternativeName>
    <alternativeName>
        <fullName evidence="1">Pantoate-activating enzyme</fullName>
    </alternativeName>
</protein>
<feature type="chain" id="PRO_0000305543" description="Pantothenate synthetase">
    <location>
        <begin position="1"/>
        <end position="295"/>
    </location>
</feature>
<feature type="active site" description="Proton donor" evidence="1">
    <location>
        <position position="37"/>
    </location>
</feature>
<feature type="binding site" evidence="1">
    <location>
        <position position="61"/>
    </location>
    <ligand>
        <name>(R)-pantoate</name>
        <dbReference type="ChEBI" id="CHEBI:15980"/>
    </ligand>
</feature>
<feature type="binding site" evidence="1">
    <location>
        <position position="61"/>
    </location>
    <ligand>
        <name>beta-alanine</name>
        <dbReference type="ChEBI" id="CHEBI:57966"/>
    </ligand>
</feature>
<feature type="binding site" evidence="1">
    <location>
        <begin position="154"/>
        <end position="157"/>
    </location>
    <ligand>
        <name>ATP</name>
        <dbReference type="ChEBI" id="CHEBI:30616"/>
    </ligand>
</feature>
<feature type="binding site" evidence="1">
    <location>
        <position position="160"/>
    </location>
    <ligand>
        <name>(R)-pantoate</name>
        <dbReference type="ChEBI" id="CHEBI:15980"/>
    </ligand>
</feature>
<feature type="binding site" evidence="1">
    <location>
        <position position="183"/>
    </location>
    <ligand>
        <name>ATP</name>
        <dbReference type="ChEBI" id="CHEBI:30616"/>
    </ligand>
</feature>
<feature type="binding site" evidence="1">
    <location>
        <begin position="191"/>
        <end position="194"/>
    </location>
    <ligand>
        <name>ATP</name>
        <dbReference type="ChEBI" id="CHEBI:30616"/>
    </ligand>
</feature>
<reference key="1">
    <citation type="journal article" date="2005" name="Proc. Natl. Acad. Sci. U.S.A.">
        <title>The genome of Salinibacter ruber: convergence and gene exchange among hyperhalophilic bacteria and archaea.</title>
        <authorList>
            <person name="Mongodin E.F."/>
            <person name="Nelson K.E."/>
            <person name="Daugherty S."/>
            <person name="DeBoy R.T."/>
            <person name="Wister J."/>
            <person name="Khouri H."/>
            <person name="Weidman J."/>
            <person name="Walsh D.A."/>
            <person name="Papke R.T."/>
            <person name="Sanchez Perez G."/>
            <person name="Sharma A.K."/>
            <person name="Nesbo C.L."/>
            <person name="MacLeod D."/>
            <person name="Bapteste E."/>
            <person name="Doolittle W.F."/>
            <person name="Charlebois R.L."/>
            <person name="Legault B."/>
            <person name="Rodriguez-Valera F."/>
        </authorList>
    </citation>
    <scope>NUCLEOTIDE SEQUENCE [LARGE SCALE GENOMIC DNA]</scope>
    <source>
        <strain>DSM 13855 / CECT 5946 / M31</strain>
    </source>
</reference>
<evidence type="ECO:0000255" key="1">
    <source>
        <dbReference type="HAMAP-Rule" id="MF_00158"/>
    </source>
</evidence>
<keyword id="KW-0067">ATP-binding</keyword>
<keyword id="KW-0963">Cytoplasm</keyword>
<keyword id="KW-0436">Ligase</keyword>
<keyword id="KW-0547">Nucleotide-binding</keyword>
<keyword id="KW-0566">Pantothenate biosynthesis</keyword>
<keyword id="KW-1185">Reference proteome</keyword>
<organism>
    <name type="scientific">Salinibacter ruber (strain DSM 13855 / M31)</name>
    <dbReference type="NCBI Taxonomy" id="309807"/>
    <lineage>
        <taxon>Bacteria</taxon>
        <taxon>Pseudomonadati</taxon>
        <taxon>Rhodothermota</taxon>
        <taxon>Rhodothermia</taxon>
        <taxon>Rhodothermales</taxon>
        <taxon>Salinibacteraceae</taxon>
        <taxon>Salinibacter</taxon>
    </lineage>
</organism>
<name>PANC_SALRD</name>
<sequence>MELLRTVDAMQAQADAARAEGQTLALVPTLGALHEGHLALVRRALNEADHVTVSVFVNPTQFGPGEDYDDYPRDLEGDRETLEALDVDAMFAPSVEEMYPYADDEALPGPLAWVDVERLDEHLCGAYREGHFRGVTTVVTKLFHACKPDVAVFGRKDAQQYVILQRLVEDLLFDIEIVGVPTVREPDGLAQSSRNEYLDPEEREQATVLYAAVTAAEEAIEGGEQAAEGVVGAMENELAAAPDADVQYAEVVDAHTLQPVDHLVPGQEVLAAVAVFFGETRLIDNTFVQVPPAQA</sequence>
<accession>Q2S2P6</accession>
<gene>
    <name evidence="1" type="primary">panC</name>
    <name type="ordered locus">SRU_1411</name>
</gene>